<keyword id="KW-0002">3D-structure</keyword>
<keyword id="KW-0963">Cytoplasm</keyword>
<keyword id="KW-1185">Reference proteome</keyword>
<keyword id="KW-0687">Ribonucleoprotein</keyword>
<keyword id="KW-0689">Ribosomal protein</keyword>
<accession>Q8SRN2</accession>
<name>RS26_ENCCU</name>
<protein>
    <recommendedName>
        <fullName evidence="3">Small ribosomal subunit protein eS26</fullName>
    </recommendedName>
    <alternativeName>
        <fullName>40S ribosomal protein S26</fullName>
    </alternativeName>
</protein>
<comment type="subunit">
    <text evidence="1">Component of the small ribosomal subunit.</text>
</comment>
<comment type="subcellular location">
    <subcellularLocation>
        <location evidence="1">Cytoplasm</location>
    </subcellularLocation>
</comment>
<comment type="developmental stage">
    <text evidence="2">Expressed in late sporogonial stages.</text>
</comment>
<comment type="similarity">
    <text evidence="3">Belongs to the eukaryotic ribosomal protein eS26 family.</text>
</comment>
<gene>
    <name type="primary">RPS26</name>
    <name type="ordered locus">ECU06_1445</name>
</gene>
<sequence>MRRNHGRGKKNRGSAGSIQCDKCGSVTPKDKAIKRFRIQSLIEQASFDDLKQATIYDVFEVPRMGYKSQFCVSCACHAKIVRVRSSQARKIRYGFNPNRVASAHN</sequence>
<dbReference type="EMBL" id="AL590446">
    <property type="protein sequence ID" value="CAD25505.1"/>
    <property type="molecule type" value="Genomic_DNA"/>
</dbReference>
<dbReference type="RefSeq" id="NP_585901.1">
    <property type="nucleotide sequence ID" value="NM_001041523.1"/>
</dbReference>
<dbReference type="PDB" id="7QEP">
    <property type="method" value="EM"/>
    <property type="resolution" value="2.70 A"/>
    <property type="chains" value="D6=1-105"/>
</dbReference>
<dbReference type="PDBsum" id="7QEP"/>
<dbReference type="EMDB" id="EMD-13936"/>
<dbReference type="SMR" id="Q8SRN2"/>
<dbReference type="FunCoup" id="Q8SRN2">
    <property type="interactions" value="181"/>
</dbReference>
<dbReference type="STRING" id="284813.Q8SRN2"/>
<dbReference type="GeneID" id="859328"/>
<dbReference type="KEGG" id="ecu:ECU06_1445"/>
<dbReference type="VEuPathDB" id="MicrosporidiaDB:ECU06_1445"/>
<dbReference type="HOGENOM" id="CLU_129451_3_0_1"/>
<dbReference type="InParanoid" id="Q8SRN2"/>
<dbReference type="OMA" id="RSHWERK"/>
<dbReference type="OrthoDB" id="10262653at2759"/>
<dbReference type="Proteomes" id="UP000000819">
    <property type="component" value="Chromosome VI"/>
</dbReference>
<dbReference type="GO" id="GO:0022627">
    <property type="term" value="C:cytosolic small ribosomal subunit"/>
    <property type="evidence" value="ECO:0007669"/>
    <property type="project" value="TreeGrafter"/>
</dbReference>
<dbReference type="GO" id="GO:0003729">
    <property type="term" value="F:mRNA binding"/>
    <property type="evidence" value="ECO:0007669"/>
    <property type="project" value="TreeGrafter"/>
</dbReference>
<dbReference type="GO" id="GO:0003735">
    <property type="term" value="F:structural constituent of ribosome"/>
    <property type="evidence" value="ECO:0007669"/>
    <property type="project" value="InterPro"/>
</dbReference>
<dbReference type="GO" id="GO:0006412">
    <property type="term" value="P:translation"/>
    <property type="evidence" value="ECO:0007669"/>
    <property type="project" value="InterPro"/>
</dbReference>
<dbReference type="Gene3D" id="3.30.1740.20">
    <property type="entry name" value="Ribosomal protein S26e"/>
    <property type="match status" value="1"/>
</dbReference>
<dbReference type="InterPro" id="IPR000892">
    <property type="entry name" value="Ribosomal_eS26"/>
</dbReference>
<dbReference type="InterPro" id="IPR038551">
    <property type="entry name" value="Ribosomal_eS26_sf"/>
</dbReference>
<dbReference type="PANTHER" id="PTHR12538">
    <property type="entry name" value="40S RIBOSOMAL PROTEIN S26"/>
    <property type="match status" value="1"/>
</dbReference>
<dbReference type="PANTHER" id="PTHR12538:SF0">
    <property type="entry name" value="40S RIBOSOMAL PROTEIN S26"/>
    <property type="match status" value="1"/>
</dbReference>
<dbReference type="Pfam" id="PF01283">
    <property type="entry name" value="Ribosomal_S26e"/>
    <property type="match status" value="1"/>
</dbReference>
<reference key="1">
    <citation type="journal article" date="2001" name="Nature">
        <title>Genome sequence and gene compaction of the eukaryote parasite Encephalitozoon cuniculi.</title>
        <authorList>
            <person name="Katinka M.D."/>
            <person name="Duprat S."/>
            <person name="Cornillot E."/>
            <person name="Metenier G."/>
            <person name="Thomarat F."/>
            <person name="Prensier G."/>
            <person name="Barbe V."/>
            <person name="Peyretaillade E."/>
            <person name="Brottier P."/>
            <person name="Wincker P."/>
            <person name="Delbac F."/>
            <person name="El Alaoui H."/>
            <person name="Peyret P."/>
            <person name="Saurin W."/>
            <person name="Gouy M."/>
            <person name="Weissenbach J."/>
            <person name="Vivares C.P."/>
        </authorList>
    </citation>
    <scope>NUCLEOTIDE SEQUENCE [LARGE SCALE GENOMIC DNA]</scope>
    <source>
        <strain>GB-M1</strain>
    </source>
</reference>
<reference key="2">
    <citation type="journal article" date="2006" name="Proteomics">
        <title>Proteomic analysis of the eukaryotic parasite Encephalitozoon cuniculi (microsporidia): a reference map for proteins expressed in late sporogonial stages.</title>
        <authorList>
            <person name="Brosson D."/>
            <person name="Kuhn L."/>
            <person name="Delbac F."/>
            <person name="Garin J."/>
            <person name="Vivares C.P."/>
            <person name="Texier C."/>
        </authorList>
    </citation>
    <scope>IDENTIFICATION BY MASS SPECTROMETRY [LARGE SCALE ANALYSIS]</scope>
    <scope>DEVELOPMENTAL STAGE</scope>
</reference>
<evidence type="ECO:0000250" key="1"/>
<evidence type="ECO:0000269" key="2">
    <source>
    </source>
</evidence>
<evidence type="ECO:0000305" key="3"/>
<organism>
    <name type="scientific">Encephalitozoon cuniculi (strain GB-M1)</name>
    <name type="common">Microsporidian parasite</name>
    <dbReference type="NCBI Taxonomy" id="284813"/>
    <lineage>
        <taxon>Eukaryota</taxon>
        <taxon>Fungi</taxon>
        <taxon>Fungi incertae sedis</taxon>
        <taxon>Microsporidia</taxon>
        <taxon>Unikaryonidae</taxon>
        <taxon>Encephalitozoon</taxon>
    </lineage>
</organism>
<feature type="chain" id="PRO_0000383131" description="Small ribosomal subunit protein eS26">
    <location>
        <begin position="1"/>
        <end position="105"/>
    </location>
</feature>
<proteinExistence type="evidence at protein level"/>